<organism>
    <name type="scientific">Orancistrocerus drewseni</name>
    <name type="common">Solitary wasp</name>
    <dbReference type="NCBI Taxonomy" id="529024"/>
    <lineage>
        <taxon>Eukaryota</taxon>
        <taxon>Metazoa</taxon>
        <taxon>Ecdysozoa</taxon>
        <taxon>Arthropoda</taxon>
        <taxon>Hexapoda</taxon>
        <taxon>Insecta</taxon>
        <taxon>Pterygota</taxon>
        <taxon>Neoptera</taxon>
        <taxon>Endopterygota</taxon>
        <taxon>Hymenoptera</taxon>
        <taxon>Apocrita</taxon>
        <taxon>Aculeata</taxon>
        <taxon>Vespoidea</taxon>
        <taxon>Vespidae</taxon>
        <taxon>Eumeninae</taxon>
        <taxon>Orancistrocerus</taxon>
    </lineage>
</organism>
<reference key="1">
    <citation type="journal article" date="2011" name="Peptides">
        <title>Venom peptides from solitary hunting wasps induce feeding disorder in lepidopteran larvae.</title>
        <authorList>
            <person name="Baek J.H."/>
            <person name="Ji Y."/>
            <person name="Shin J.S."/>
            <person name="Lee S."/>
            <person name="Lee S.H."/>
        </authorList>
    </citation>
    <scope>NUCLEOTIDE SEQUENCE [MRNA]</scope>
    <scope>SYNTHESIS</scope>
    <scope>PROBABLE AMIDATION AT LEU-10</scope>
    <source>
        <tissue>Venom gland</tissue>
    </source>
</reference>
<feature type="peptide" id="PRO_0000458775" description="Venom peptide 4" evidence="2">
    <location>
        <begin position="1"/>
        <end position="10"/>
    </location>
</feature>
<feature type="modified residue" description="Leucine amide" evidence="5">
    <location>
        <position position="10"/>
    </location>
</feature>
<sequence length="10" mass="1111">LDPKVVQSLL</sequence>
<evidence type="ECO:0000255" key="1"/>
<evidence type="ECO:0000269" key="2">
    <source>
    </source>
</evidence>
<evidence type="ECO:0000303" key="3">
    <source>
    </source>
</evidence>
<evidence type="ECO:0000305" key="4"/>
<evidence type="ECO:0000305" key="5">
    <source>
    </source>
</evidence>
<comment type="subcellular location">
    <subcellularLocation>
        <location evidence="5">Secreted</location>
    </subcellularLocation>
    <subcellularLocation>
        <location evidence="4">Target cell membrane</location>
    </subcellularLocation>
    <text evidence="5">May have both amphipathic alpha-helical and coil conformation.</text>
</comment>
<comment type="tissue specificity">
    <text evidence="5">Expressed by the venom gland.</text>
</comment>
<comment type="miscellaneous">
    <text evidence="2">Negative results: has no activity against fungi (B.cinerea and C.albicans) and bacteria (E.coli and S.aureus) (PubMed:21184791). Has no hemolytic activity against human erythrocytes (PubMed:21184791). Does not show cytolytic activity against insect cell lines (PubMed:21184791). Does not induce feeding disorder in lepidopteran larvae after peptide injection in the vicinity of the head and thorax (PubMed:21184791).</text>
</comment>
<comment type="similarity">
    <text evidence="1">Belongs to the MCD family.</text>
</comment>
<accession>P0DX30</accession>
<keyword id="KW-0027">Amidation</keyword>
<keyword id="KW-0472">Membrane</keyword>
<keyword id="KW-0964">Secreted</keyword>
<keyword id="KW-1052">Target cell membrane</keyword>
<keyword id="KW-1053">Target membrane</keyword>
<dbReference type="GO" id="GO:0005576">
    <property type="term" value="C:extracellular region"/>
    <property type="evidence" value="ECO:0007669"/>
    <property type="project" value="UniProtKB-SubCell"/>
</dbReference>
<dbReference type="GO" id="GO:0016020">
    <property type="term" value="C:membrane"/>
    <property type="evidence" value="ECO:0007669"/>
    <property type="project" value="UniProtKB-KW"/>
</dbReference>
<dbReference type="GO" id="GO:0044218">
    <property type="term" value="C:other organism cell membrane"/>
    <property type="evidence" value="ECO:0007669"/>
    <property type="project" value="UniProtKB-KW"/>
</dbReference>
<protein>
    <recommendedName>
        <fullName evidence="3">Venom peptide 4</fullName>
        <shortName evidence="3">OdVP4</shortName>
        <shortName evidence="4">VP4</shortName>
    </recommendedName>
</protein>
<proteinExistence type="evidence at protein level"/>
<name>VP4_ORADR</name>